<dbReference type="EC" id="1.11.1.12" evidence="1"/>
<dbReference type="EMBL" id="AB121013">
    <property type="protein sequence ID" value="BAE17021.1"/>
    <property type="molecule type" value="mRNA"/>
</dbReference>
<dbReference type="PeroxiBase" id="3641">
    <property type="entry name" value="CapGPx04"/>
</dbReference>
<dbReference type="Proteomes" id="UP000504640">
    <property type="component" value="Unplaced"/>
</dbReference>
<dbReference type="GO" id="GO:0005829">
    <property type="term" value="C:cytosol"/>
    <property type="evidence" value="ECO:0000250"/>
    <property type="project" value="UniProtKB"/>
</dbReference>
<dbReference type="GO" id="GO:0005739">
    <property type="term" value="C:mitochondrion"/>
    <property type="evidence" value="ECO:0007669"/>
    <property type="project" value="UniProtKB-SubCell"/>
</dbReference>
<dbReference type="GO" id="GO:0005634">
    <property type="term" value="C:nucleus"/>
    <property type="evidence" value="ECO:0007669"/>
    <property type="project" value="TreeGrafter"/>
</dbReference>
<dbReference type="GO" id="GO:0004602">
    <property type="term" value="F:glutathione peroxidase activity"/>
    <property type="evidence" value="ECO:0007669"/>
    <property type="project" value="TreeGrafter"/>
</dbReference>
<dbReference type="GO" id="GO:0047066">
    <property type="term" value="F:phospholipid-hydroperoxide glutathione peroxidase activity"/>
    <property type="evidence" value="ECO:0000250"/>
    <property type="project" value="UniProtKB"/>
</dbReference>
<dbReference type="GO" id="GO:0019369">
    <property type="term" value="P:arachidonate metabolic process"/>
    <property type="evidence" value="ECO:0000250"/>
    <property type="project" value="UniProtKB"/>
</dbReference>
<dbReference type="GO" id="GO:0019372">
    <property type="term" value="P:lipoxygenase pathway"/>
    <property type="evidence" value="ECO:0000250"/>
    <property type="project" value="UniProtKB"/>
</dbReference>
<dbReference type="GO" id="GO:0110076">
    <property type="term" value="P:negative regulation of ferroptosis"/>
    <property type="evidence" value="ECO:0000250"/>
    <property type="project" value="UniProtKB"/>
</dbReference>
<dbReference type="GO" id="GO:0006979">
    <property type="term" value="P:response to oxidative stress"/>
    <property type="evidence" value="ECO:0000250"/>
    <property type="project" value="UniProtKB"/>
</dbReference>
<dbReference type="GO" id="GO:0007283">
    <property type="term" value="P:spermatogenesis"/>
    <property type="evidence" value="ECO:0000250"/>
    <property type="project" value="UniProtKB"/>
</dbReference>
<dbReference type="CDD" id="cd00340">
    <property type="entry name" value="GSH_Peroxidase"/>
    <property type="match status" value="1"/>
</dbReference>
<dbReference type="FunFam" id="3.40.30.10:FF:000111">
    <property type="entry name" value="Glutathione peroxidase"/>
    <property type="match status" value="1"/>
</dbReference>
<dbReference type="Gene3D" id="3.40.30.10">
    <property type="entry name" value="Glutaredoxin"/>
    <property type="match status" value="1"/>
</dbReference>
<dbReference type="InterPro" id="IPR000889">
    <property type="entry name" value="Glutathione_peroxidase"/>
</dbReference>
<dbReference type="InterPro" id="IPR029759">
    <property type="entry name" value="GPX_AS"/>
</dbReference>
<dbReference type="InterPro" id="IPR029760">
    <property type="entry name" value="GPX_CS"/>
</dbReference>
<dbReference type="InterPro" id="IPR036249">
    <property type="entry name" value="Thioredoxin-like_sf"/>
</dbReference>
<dbReference type="PANTHER" id="PTHR11592">
    <property type="entry name" value="GLUTATHIONE PEROXIDASE"/>
    <property type="match status" value="1"/>
</dbReference>
<dbReference type="PANTHER" id="PTHR11592:SF134">
    <property type="entry name" value="PHOSPHOLIPID HYDROPEROXIDE GLUTATHIONE PEROXIDASE"/>
    <property type="match status" value="1"/>
</dbReference>
<dbReference type="Pfam" id="PF00255">
    <property type="entry name" value="GSHPx"/>
    <property type="match status" value="1"/>
</dbReference>
<dbReference type="PIRSF" id="PIRSF000303">
    <property type="entry name" value="Glutathion_perox"/>
    <property type="match status" value="1"/>
</dbReference>
<dbReference type="SUPFAM" id="SSF52833">
    <property type="entry name" value="Thioredoxin-like"/>
    <property type="match status" value="1"/>
</dbReference>
<dbReference type="PROSITE" id="PS00460">
    <property type="entry name" value="GLUTATHIONE_PEROXID_1"/>
    <property type="match status" value="1"/>
</dbReference>
<dbReference type="PROSITE" id="PS00763">
    <property type="entry name" value="GLUTATHIONE_PEROXID_2"/>
    <property type="match status" value="1"/>
</dbReference>
<dbReference type="PROSITE" id="PS51355">
    <property type="entry name" value="GLUTATHIONE_PEROXID_3"/>
    <property type="match status" value="1"/>
</dbReference>
<comment type="function">
    <text evidence="1 2 3">Essential antioxidant peroxidase that directly reduces phospholipid hydroperoxide even if they are incorporated in membranes and lipoproteins (By similarity). Can also reduce fatty acid hydroperoxide, cholesterol hydroperoxide and thymine hydroperoxide (By similarity). Plays a key role in protecting cells from oxidative damage by preventing membrane lipid peroxidation (By similarity). Required to prevent cells from ferroptosis, a non-apoptotic cell death resulting from an iron-dependent accumulation of lipid reactive oxygen species (By similarity). The presence of selenocysteine (Sec) versus Cys at the active site is essential for life: it provides resistance to overoxidation and prevents cells against ferroptosis (By similarity). The presence of Sec at the active site is also essential for the survival of a specific type of parvalbumin-positive interneurons, thereby preventing against fatal epileptic seizures (By similarity). May be required to protect cells from the toxicity of ingested lipid hydroperoxides (By similarity). Required for normal sperm development and male fertility (By similarity). Essential for maturation and survival of photoreceptor cells (By similarity). Plays a role in a primary T-cell response to viral and parasitic infection by protecting T-cells from ferroptosis and by supporting T-cell expansion (By similarity). Plays a role of glutathione peroxidase in platelets in the arachidonic acid metabolism (By similarity). Reduces hydroperoxy ester lipids formed by a 15-lipoxygenase that may play a role as down-regulator of the cellular 15-lipoxygenase pathway (By similarity).</text>
</comment>
<comment type="catalytic activity">
    <reaction evidence="2">
        <text>a hydroperoxy polyunsaturated fatty acid + 2 glutathione = a hydroxy polyunsaturated fatty acid + glutathione disulfide + H2O</text>
        <dbReference type="Rhea" id="RHEA:19057"/>
        <dbReference type="ChEBI" id="CHEBI:15377"/>
        <dbReference type="ChEBI" id="CHEBI:57925"/>
        <dbReference type="ChEBI" id="CHEBI:58297"/>
        <dbReference type="ChEBI" id="CHEBI:131871"/>
        <dbReference type="ChEBI" id="CHEBI:134019"/>
        <dbReference type="EC" id="1.11.1.12"/>
    </reaction>
    <physiologicalReaction direction="left-to-right" evidence="2">
        <dbReference type="Rhea" id="RHEA:19058"/>
    </physiologicalReaction>
</comment>
<comment type="catalytic activity">
    <reaction evidence="3">
        <text>(12S)-hydroperoxy-(5Z,8Z,10E,14Z)-eicosatetraenoate + 2 glutathione = (12S)-hydroxy-(5Z,8Z,10E,14Z)-eicosatetraenoate + glutathione disulfide + H2O</text>
        <dbReference type="Rhea" id="RHEA:50708"/>
        <dbReference type="ChEBI" id="CHEBI:15377"/>
        <dbReference type="ChEBI" id="CHEBI:57444"/>
        <dbReference type="ChEBI" id="CHEBI:57925"/>
        <dbReference type="ChEBI" id="CHEBI:58297"/>
        <dbReference type="ChEBI" id="CHEBI:90680"/>
    </reaction>
    <physiologicalReaction direction="left-to-right" evidence="3">
        <dbReference type="Rhea" id="RHEA:50709"/>
    </physiologicalReaction>
</comment>
<comment type="catalytic activity">
    <reaction evidence="2">
        <text>(13S)-hydroperoxy-(9Z,11E)-octadecadienoate + 2 glutathione = (13S)-hydroxy-(9Z,11E)-octadecadienoate + glutathione disulfide + H2O</text>
        <dbReference type="Rhea" id="RHEA:48888"/>
        <dbReference type="ChEBI" id="CHEBI:15377"/>
        <dbReference type="ChEBI" id="CHEBI:57466"/>
        <dbReference type="ChEBI" id="CHEBI:57925"/>
        <dbReference type="ChEBI" id="CHEBI:58297"/>
        <dbReference type="ChEBI" id="CHEBI:90850"/>
    </reaction>
    <physiologicalReaction direction="left-to-right" evidence="2">
        <dbReference type="Rhea" id="RHEA:48889"/>
    </physiologicalReaction>
</comment>
<comment type="subunit">
    <text evidence="3">Monomer. Has a tendency to form higher mass oligomers. Interacts with FUNDC1; this interaction promotes GPX4 recruitment into mitochondria through TOM/TIM complex where it is degraded by mitophagy.</text>
</comment>
<comment type="subcellular location">
    <molecule>Isoform Mitochondrial</molecule>
    <subcellularLocation>
        <location evidence="1">Mitochondrion</location>
    </subcellularLocation>
</comment>
<comment type="subcellular location">
    <molecule>Isoform Cytoplasmic</molecule>
    <subcellularLocation>
        <location evidence="1">Cytoplasm</location>
    </subcellularLocation>
</comment>
<comment type="alternative products">
    <event type="alternative initiation"/>
    <isoform>
        <id>Q4AEG9-1</id>
        <name>Mitochondrial</name>
        <sequence type="displayed"/>
    </isoform>
    <isoform>
        <id>Q4AEG9-2</id>
        <name>Cytoplasmic</name>
        <sequence type="described" ref="VSP_018739"/>
    </isoform>
</comment>
<comment type="similarity">
    <text evidence="6">Belongs to the glutathione peroxidase family.</text>
</comment>
<organism>
    <name type="scientific">Sapajus apella</name>
    <name type="common">Brown-capped capuchin</name>
    <name type="synonym">Cebus apella</name>
    <dbReference type="NCBI Taxonomy" id="9515"/>
    <lineage>
        <taxon>Eukaryota</taxon>
        <taxon>Metazoa</taxon>
        <taxon>Chordata</taxon>
        <taxon>Craniata</taxon>
        <taxon>Vertebrata</taxon>
        <taxon>Euteleostomi</taxon>
        <taxon>Mammalia</taxon>
        <taxon>Eutheria</taxon>
        <taxon>Euarchontoglires</taxon>
        <taxon>Primates</taxon>
        <taxon>Haplorrhini</taxon>
        <taxon>Platyrrhini</taxon>
        <taxon>Cebidae</taxon>
        <taxon>Cebinae</taxon>
        <taxon>Sapajus</taxon>
    </lineage>
</organism>
<accession>Q4AEG9</accession>
<protein>
    <recommendedName>
        <fullName evidence="1">Phospholipid hydroperoxide glutathione peroxidase</fullName>
        <shortName evidence="1">PHGPx</shortName>
        <ecNumber evidence="1">1.11.1.12</ecNumber>
    </recommendedName>
    <alternativeName>
        <fullName evidence="1">Glutathione peroxidase 4</fullName>
        <shortName evidence="1">GPx-4</shortName>
        <shortName evidence="1">GSHPx-4</shortName>
    </alternativeName>
</protein>
<proteinExistence type="evidence at transcript level"/>
<sequence>MSLGRLCRLLKPALLCGALAAPGLAGTMCASRDDWRCAGSMHEFSAKDIDGHMVNLDKYRGFVCIVTNVASQUGKTEVNYTQLVDLHARYAECGLRILAFPCNQFGKQEPGSNEEIKEFAAGYNVKFDMFSKICVNGDDAHPLWKWMKIQPKGKGILGNAIKWNFTKFLIDKNGCVVKRYGPMEEPQVIEKDLPHYF</sequence>
<keyword id="KW-0024">Alternative initiation</keyword>
<keyword id="KW-0963">Cytoplasm</keyword>
<keyword id="KW-0217">Developmental protein</keyword>
<keyword id="KW-0443">Lipid metabolism</keyword>
<keyword id="KW-0496">Mitochondrion</keyword>
<keyword id="KW-0560">Oxidoreductase</keyword>
<keyword id="KW-0575">Peroxidase</keyword>
<keyword id="KW-0597">Phosphoprotein</keyword>
<keyword id="KW-1185">Reference proteome</keyword>
<keyword id="KW-0712">Selenocysteine</keyword>
<keyword id="KW-0809">Transit peptide</keyword>
<name>GPX4_SAPAP</name>
<gene>
    <name evidence="1" type="primary">GPX4</name>
</gene>
<feature type="transit peptide" description="Mitochondrion" evidence="5">
    <location>
        <begin position="1"/>
        <end status="unknown"/>
    </location>
</feature>
<feature type="chain" id="PRO_0000042607" description="Phospholipid hydroperoxide glutathione peroxidase">
    <location>
        <begin status="unknown"/>
        <end position="197"/>
    </location>
</feature>
<feature type="active site" evidence="1">
    <location>
        <position position="73"/>
    </location>
</feature>
<feature type="non-standard amino acid" description="Selenocysteine" evidence="1">
    <location>
        <position position="73"/>
    </location>
</feature>
<feature type="modified residue" description="Phosphoserine" evidence="4">
    <location>
        <position position="40"/>
    </location>
</feature>
<feature type="splice variant" id="VSP_018739" description="In isoform Cytoplasmic." evidence="6">
    <location>
        <begin position="1"/>
        <end position="27"/>
    </location>
</feature>
<evidence type="ECO:0000250" key="1">
    <source>
        <dbReference type="UniProtKB" id="O70325"/>
    </source>
</evidence>
<evidence type="ECO:0000250" key="2">
    <source>
        <dbReference type="UniProtKB" id="P36968"/>
    </source>
</evidence>
<evidence type="ECO:0000250" key="3">
    <source>
        <dbReference type="UniProtKB" id="P36969"/>
    </source>
</evidence>
<evidence type="ECO:0000250" key="4">
    <source>
        <dbReference type="UniProtKB" id="P36970"/>
    </source>
</evidence>
<evidence type="ECO:0000255" key="5"/>
<evidence type="ECO:0000305" key="6"/>
<reference key="1">
    <citation type="journal article" date="2005" name="Comp. Biochem. Physiol.">
        <title>Structure, gene expression, and evolution of primate glutathione peroxidases.</title>
        <authorList>
            <person name="Fukuhara R."/>
            <person name="Kageyama T."/>
        </authorList>
    </citation>
    <scope>NUCLEOTIDE SEQUENCE [MRNA]</scope>
</reference>